<gene>
    <name type="primary">Akr1b8</name>
    <name type="synonym">Fgfrp</name>
</gene>
<accession>P45377</accession>
<accession>Q99JN4</accession>
<protein>
    <recommendedName>
        <fullName>Aldose reductase-related protein 2</fullName>
        <shortName>AR</shortName>
        <ecNumber>1.1.1.21</ecNumber>
    </recommendedName>
    <alternativeName>
        <fullName>Aldehyde reductase</fullName>
    </alternativeName>
    <alternativeName>
        <fullName>Fibroblast growth factor-regulated protein</fullName>
    </alternativeName>
    <alternativeName>
        <fullName>Protein FR-1</fullName>
    </alternativeName>
</protein>
<evidence type="ECO:0000250" key="1"/>
<evidence type="ECO:0000269" key="2">
    <source>
    </source>
</evidence>
<evidence type="ECO:0000305" key="3"/>
<evidence type="ECO:0007829" key="4">
    <source>
        <dbReference type="PDB" id="1FRB"/>
    </source>
</evidence>
<comment type="catalytic activity">
    <reaction>
        <text>an alditol + NAD(+) = an aldose + NADH + H(+)</text>
        <dbReference type="Rhea" id="RHEA:12785"/>
        <dbReference type="Rhea" id="RHEA-COMP:9554"/>
        <dbReference type="Rhea" id="RHEA-COMP:9555"/>
        <dbReference type="ChEBI" id="CHEBI:15378"/>
        <dbReference type="ChEBI" id="CHEBI:15693"/>
        <dbReference type="ChEBI" id="CHEBI:17522"/>
        <dbReference type="ChEBI" id="CHEBI:57540"/>
        <dbReference type="ChEBI" id="CHEBI:57945"/>
        <dbReference type="EC" id="1.1.1.21"/>
    </reaction>
</comment>
<comment type="catalytic activity">
    <reaction>
        <text>an alditol + NADP(+) = an aldose + NADPH + H(+)</text>
        <dbReference type="Rhea" id="RHEA:12789"/>
        <dbReference type="Rhea" id="RHEA-COMP:9554"/>
        <dbReference type="Rhea" id="RHEA-COMP:9555"/>
        <dbReference type="ChEBI" id="CHEBI:15378"/>
        <dbReference type="ChEBI" id="CHEBI:15693"/>
        <dbReference type="ChEBI" id="CHEBI:17522"/>
        <dbReference type="ChEBI" id="CHEBI:57783"/>
        <dbReference type="ChEBI" id="CHEBI:58349"/>
        <dbReference type="EC" id="1.1.1.21"/>
    </reaction>
</comment>
<comment type="subunit">
    <text evidence="1">Monomer.</text>
</comment>
<comment type="subcellular location">
    <subcellularLocation>
        <location evidence="1">Cytoplasm</location>
    </subcellularLocation>
</comment>
<comment type="induction">
    <text>By FGF-1.</text>
</comment>
<comment type="similarity">
    <text evidence="3">Belongs to the aldo/keto reductase family.</text>
</comment>
<feature type="chain" id="PRO_0000124631" description="Aldose reductase-related protein 2">
    <location>
        <begin position="1"/>
        <end position="316"/>
    </location>
</feature>
<feature type="active site" description="Proton donor">
    <location>
        <position position="49"/>
    </location>
</feature>
<feature type="binding site">
    <location>
        <position position="111"/>
    </location>
    <ligand>
        <name>substrate</name>
    </ligand>
</feature>
<feature type="binding site" evidence="2">
    <location>
        <begin position="211"/>
        <end position="273"/>
    </location>
    <ligand>
        <name>NADP(+)</name>
        <dbReference type="ChEBI" id="CHEBI:58349"/>
    </ligand>
</feature>
<feature type="site" description="Lowers pKa of active site Tyr" evidence="1">
    <location>
        <position position="78"/>
    </location>
</feature>
<feature type="sequence conflict" description="In Ref. 2; AAH05789." evidence="3" ref="2">
    <original>E</original>
    <variation>K</variation>
    <location>
        <position position="242"/>
    </location>
</feature>
<feature type="strand" evidence="4">
    <location>
        <begin position="4"/>
        <end position="6"/>
    </location>
</feature>
<feature type="strand" evidence="4">
    <location>
        <begin position="12"/>
        <end position="16"/>
    </location>
</feature>
<feature type="helix" evidence="4">
    <location>
        <begin position="25"/>
        <end position="37"/>
    </location>
</feature>
<feature type="strand" evidence="4">
    <location>
        <begin position="42"/>
        <end position="44"/>
    </location>
</feature>
<feature type="helix" evidence="4">
    <location>
        <begin position="47"/>
        <end position="49"/>
    </location>
</feature>
<feature type="helix" evidence="4">
    <location>
        <begin position="52"/>
        <end position="64"/>
    </location>
</feature>
<feature type="helix" evidence="4">
    <location>
        <begin position="70"/>
        <end position="72"/>
    </location>
</feature>
<feature type="strand" evidence="4">
    <location>
        <begin position="74"/>
        <end position="79"/>
    </location>
</feature>
<feature type="helix" evidence="4">
    <location>
        <begin position="81"/>
        <end position="83"/>
    </location>
</feature>
<feature type="helix" evidence="4">
    <location>
        <begin position="86"/>
        <end position="100"/>
    </location>
</feature>
<feature type="strand" evidence="4">
    <location>
        <begin position="105"/>
        <end position="110"/>
    </location>
</feature>
<feature type="helix" evidence="4">
    <location>
        <begin position="138"/>
        <end position="150"/>
    </location>
</feature>
<feature type="strand" evidence="4">
    <location>
        <begin position="153"/>
        <end position="161"/>
    </location>
</feature>
<feature type="helix" evidence="4">
    <location>
        <begin position="164"/>
        <end position="171"/>
    </location>
</feature>
<feature type="strand" evidence="4">
    <location>
        <begin position="182"/>
        <end position="186"/>
    </location>
</feature>
<feature type="helix" evidence="4">
    <location>
        <begin position="194"/>
        <end position="202"/>
    </location>
</feature>
<feature type="strand" evidence="4">
    <location>
        <begin position="206"/>
        <end position="211"/>
    </location>
</feature>
<feature type="turn" evidence="4">
    <location>
        <begin position="228"/>
        <end position="230"/>
    </location>
</feature>
<feature type="helix" evidence="4">
    <location>
        <begin position="232"/>
        <end position="240"/>
    </location>
</feature>
<feature type="helix" evidence="4">
    <location>
        <begin position="245"/>
        <end position="254"/>
    </location>
</feature>
<feature type="turn" evidence="4">
    <location>
        <begin position="255"/>
        <end position="257"/>
    </location>
</feature>
<feature type="helix" evidence="4">
    <location>
        <begin position="267"/>
        <end position="274"/>
    </location>
</feature>
<feature type="helix" evidence="4">
    <location>
        <begin position="283"/>
        <end position="290"/>
    </location>
</feature>
<feature type="helix" evidence="4">
    <location>
        <begin position="302"/>
        <end position="304"/>
    </location>
</feature>
<name>ALD2_MOUSE</name>
<keyword id="KW-0002">3D-structure</keyword>
<keyword id="KW-0963">Cytoplasm</keyword>
<keyword id="KW-0521">NADP</keyword>
<keyword id="KW-0560">Oxidoreductase</keyword>
<keyword id="KW-1185">Reference proteome</keyword>
<sequence length="316" mass="36121">MATFVELSTKAKMPIVGLGTWKSPPNQVKEAVKAAIDAGYRHIDCAYAYCNENEVGEAIQEKIKEKAVQREDLFIVSKLWPTCFEKKLLKEAFQKTLTDLKLDYLDLYLIHWPQGLQPGKELFPKDDQGRILTSKTTFLEAWEGMEELVDQGLVKALGVSNFNHFQIERLLNKPGLKHKPVTNQVECHPYLTQEKLIQYCHSKGISVTAYSPLGSPDRPSAKPEDPSLLEDPKIKEIAAKHEKTSAQVLIRFHIQRNVVVIPKSVTPSRIQENIQVFDFQLSDEEMATILSFNRNWRACLLPETVNMEEYPYDAEY</sequence>
<reference key="1">
    <citation type="journal article" date="1994" name="J. Biol. Chem.">
        <title>A delayed-early gene activated by fibroblast growth factor-1 encodes a protein related to aldose reductase.</title>
        <authorList>
            <person name="Donohue P.J."/>
            <person name="Alberts G.F."/>
            <person name="Hampton B.S."/>
            <person name="Winkles J.A."/>
        </authorList>
    </citation>
    <scope>NUCLEOTIDE SEQUENCE [MRNA]</scope>
    <source>
        <strain>BALB/cJ</strain>
    </source>
</reference>
<reference key="2">
    <citation type="journal article" date="2004" name="Genome Res.">
        <title>The status, quality, and expansion of the NIH full-length cDNA project: the Mammalian Gene Collection (MGC).</title>
        <authorList>
            <consortium name="The MGC Project Team"/>
        </authorList>
    </citation>
    <scope>NUCLEOTIDE SEQUENCE [LARGE SCALE MRNA]</scope>
    <source>
        <strain>FVB/N</strain>
        <tissue>Mammary gland</tissue>
    </source>
</reference>
<reference key="3">
    <citation type="journal article" date="2010" name="Cell">
        <title>A tissue-specific atlas of mouse protein phosphorylation and expression.</title>
        <authorList>
            <person name="Huttlin E.L."/>
            <person name="Jedrychowski M.P."/>
            <person name="Elias J.E."/>
            <person name="Goswami T."/>
            <person name="Rad R."/>
            <person name="Beausoleil S.A."/>
            <person name="Villen J."/>
            <person name="Haas W."/>
            <person name="Sowa M.E."/>
            <person name="Gygi S.P."/>
        </authorList>
    </citation>
    <scope>IDENTIFICATION BY MASS SPECTROMETRY [LARGE SCALE ANALYSIS]</scope>
    <source>
        <tissue>Brown adipose tissue</tissue>
        <tissue>Heart</tissue>
        <tissue>Lung</tissue>
        <tissue>Spleen</tissue>
        <tissue>Testis</tissue>
    </source>
</reference>
<reference key="4">
    <citation type="journal article" date="1995" name="Biochemistry">
        <title>1.7-A structure of FR-1, a fibroblast growth factor-induced member of the aldo-keto reductase family, complexed with coenzyme and inhibitor.</title>
        <authorList>
            <person name="Wilson D.K."/>
            <person name="Nakano T."/>
            <person name="Petrash M."/>
            <person name="Quiocho F.A."/>
        </authorList>
    </citation>
    <scope>X-RAY CRYSTALLOGRAPHY (1.7 ANGSTROMS) IN COMPLEX WITH NADPH AND INHIBITOR</scope>
</reference>
<organism>
    <name type="scientific">Mus musculus</name>
    <name type="common">Mouse</name>
    <dbReference type="NCBI Taxonomy" id="10090"/>
    <lineage>
        <taxon>Eukaryota</taxon>
        <taxon>Metazoa</taxon>
        <taxon>Chordata</taxon>
        <taxon>Craniata</taxon>
        <taxon>Vertebrata</taxon>
        <taxon>Euteleostomi</taxon>
        <taxon>Mammalia</taxon>
        <taxon>Eutheria</taxon>
        <taxon>Euarchontoglires</taxon>
        <taxon>Glires</taxon>
        <taxon>Rodentia</taxon>
        <taxon>Myomorpha</taxon>
        <taxon>Muroidea</taxon>
        <taxon>Muridae</taxon>
        <taxon>Murinae</taxon>
        <taxon>Mus</taxon>
        <taxon>Mus</taxon>
    </lineage>
</organism>
<dbReference type="EC" id="1.1.1.21"/>
<dbReference type="EMBL" id="U04204">
    <property type="protein sequence ID" value="AAA16953.1"/>
    <property type="molecule type" value="mRNA"/>
</dbReference>
<dbReference type="EMBL" id="BC005789">
    <property type="protein sequence ID" value="AAH05789.1"/>
    <property type="molecule type" value="mRNA"/>
</dbReference>
<dbReference type="CCDS" id="CCDS19991.1"/>
<dbReference type="PIR" id="A53440">
    <property type="entry name" value="A53440"/>
</dbReference>
<dbReference type="RefSeq" id="NP_032038.1">
    <property type="nucleotide sequence ID" value="NM_008012.2"/>
</dbReference>
<dbReference type="PDB" id="1FRB">
    <property type="method" value="X-ray"/>
    <property type="resolution" value="1.70 A"/>
    <property type="chains" value="A=2-316"/>
</dbReference>
<dbReference type="PDBsum" id="1FRB"/>
<dbReference type="SMR" id="P45377"/>
<dbReference type="FunCoup" id="P45377">
    <property type="interactions" value="591"/>
</dbReference>
<dbReference type="STRING" id="10090.ENSMUSP00000040244"/>
<dbReference type="SwissLipids" id="SLP:000001939"/>
<dbReference type="GlyGen" id="P45377">
    <property type="glycosylation" value="1 site, 1 O-linked glycan (1 site)"/>
</dbReference>
<dbReference type="iPTMnet" id="P45377"/>
<dbReference type="PhosphoSitePlus" id="P45377"/>
<dbReference type="SwissPalm" id="P45377"/>
<dbReference type="REPRODUCTION-2DPAGE" id="IPI00273096"/>
<dbReference type="REPRODUCTION-2DPAGE" id="P45377"/>
<dbReference type="jPOST" id="P45377"/>
<dbReference type="PaxDb" id="10090-ENSMUSP00000040244"/>
<dbReference type="PeptideAtlas" id="P45377"/>
<dbReference type="ProteomicsDB" id="296393"/>
<dbReference type="Pumba" id="P45377"/>
<dbReference type="DNASU" id="14187"/>
<dbReference type="Ensembl" id="ENSMUST00000038406.7">
    <property type="protein sequence ID" value="ENSMUSP00000040244.6"/>
    <property type="gene ID" value="ENSMUSG00000029762.7"/>
</dbReference>
<dbReference type="GeneID" id="14187"/>
<dbReference type="KEGG" id="mmu:14187"/>
<dbReference type="UCSC" id="uc009bgz.1">
    <property type="organism name" value="mouse"/>
</dbReference>
<dbReference type="AGR" id="MGI:107673"/>
<dbReference type="CTD" id="14187"/>
<dbReference type="MGI" id="MGI:107673">
    <property type="gene designation" value="Akr1b8"/>
</dbReference>
<dbReference type="VEuPathDB" id="HostDB:ENSMUSG00000029762"/>
<dbReference type="eggNOG" id="KOG1577">
    <property type="taxonomic scope" value="Eukaryota"/>
</dbReference>
<dbReference type="GeneTree" id="ENSGT00940000154773"/>
<dbReference type="HOGENOM" id="CLU_023205_0_0_1"/>
<dbReference type="InParanoid" id="P45377"/>
<dbReference type="OMA" id="WSINIFD"/>
<dbReference type="OrthoDB" id="416253at2759"/>
<dbReference type="PhylomeDB" id="P45377"/>
<dbReference type="TreeFam" id="TF106492"/>
<dbReference type="Reactome" id="R-MMU-193144">
    <property type="pathway name" value="Estrogen biosynthesis"/>
</dbReference>
<dbReference type="BioGRID-ORCS" id="14187">
    <property type="hits" value="2 hits in 79 CRISPR screens"/>
</dbReference>
<dbReference type="ChiTaRS" id="Akr1b8">
    <property type="organism name" value="mouse"/>
</dbReference>
<dbReference type="EvolutionaryTrace" id="P45377"/>
<dbReference type="PRO" id="PR:P45377"/>
<dbReference type="Proteomes" id="UP000000589">
    <property type="component" value="Chromosome 6"/>
</dbReference>
<dbReference type="RNAct" id="P45377">
    <property type="molecule type" value="protein"/>
</dbReference>
<dbReference type="Bgee" id="ENSMUSG00000029762">
    <property type="expression patterns" value="Expressed in pyloric antrum and 215 other cell types or tissues"/>
</dbReference>
<dbReference type="GO" id="GO:0005737">
    <property type="term" value="C:cytoplasm"/>
    <property type="evidence" value="ECO:0007669"/>
    <property type="project" value="UniProtKB-SubCell"/>
</dbReference>
<dbReference type="GO" id="GO:0004032">
    <property type="term" value="F:aldose reductase (NADPH) activity"/>
    <property type="evidence" value="ECO:0007669"/>
    <property type="project" value="Ensembl"/>
</dbReference>
<dbReference type="GO" id="GO:0052650">
    <property type="term" value="F:all-trans-retinol dehydrogenase (NADP+) activity"/>
    <property type="evidence" value="ECO:0007669"/>
    <property type="project" value="Ensembl"/>
</dbReference>
<dbReference type="GO" id="GO:0070401">
    <property type="term" value="F:NADP+ binding"/>
    <property type="evidence" value="ECO:0007669"/>
    <property type="project" value="Ensembl"/>
</dbReference>
<dbReference type="GO" id="GO:0070402">
    <property type="term" value="F:NADPH binding"/>
    <property type="evidence" value="ECO:0007669"/>
    <property type="project" value="Ensembl"/>
</dbReference>
<dbReference type="GO" id="GO:0016918">
    <property type="term" value="F:retinal binding"/>
    <property type="evidence" value="ECO:0007669"/>
    <property type="project" value="Ensembl"/>
</dbReference>
<dbReference type="GO" id="GO:0019751">
    <property type="term" value="P:polyol metabolic process"/>
    <property type="evidence" value="ECO:0007669"/>
    <property type="project" value="Ensembl"/>
</dbReference>
<dbReference type="GO" id="GO:0042574">
    <property type="term" value="P:retinal metabolic process"/>
    <property type="evidence" value="ECO:0007669"/>
    <property type="project" value="Ensembl"/>
</dbReference>
<dbReference type="CDD" id="cd19107">
    <property type="entry name" value="AKR_AKR1B1-19"/>
    <property type="match status" value="1"/>
</dbReference>
<dbReference type="FunFam" id="3.20.20.100:FF:000068">
    <property type="entry name" value="Aldo-keto reductase family 1 member B10"/>
    <property type="match status" value="1"/>
</dbReference>
<dbReference type="Gene3D" id="3.20.20.100">
    <property type="entry name" value="NADP-dependent oxidoreductase domain"/>
    <property type="match status" value="1"/>
</dbReference>
<dbReference type="InterPro" id="IPR020471">
    <property type="entry name" value="AKR"/>
</dbReference>
<dbReference type="InterPro" id="IPR018170">
    <property type="entry name" value="Aldo/ket_reductase_CS"/>
</dbReference>
<dbReference type="InterPro" id="IPR023210">
    <property type="entry name" value="NADP_OxRdtase_dom"/>
</dbReference>
<dbReference type="InterPro" id="IPR036812">
    <property type="entry name" value="NADP_OxRdtase_dom_sf"/>
</dbReference>
<dbReference type="PANTHER" id="PTHR11732">
    <property type="entry name" value="ALDO/KETO REDUCTASE"/>
    <property type="match status" value="1"/>
</dbReference>
<dbReference type="Pfam" id="PF00248">
    <property type="entry name" value="Aldo_ket_red"/>
    <property type="match status" value="1"/>
</dbReference>
<dbReference type="PIRSF" id="PIRSF000097">
    <property type="entry name" value="AKR"/>
    <property type="match status" value="1"/>
</dbReference>
<dbReference type="PRINTS" id="PR00069">
    <property type="entry name" value="ALDKETRDTASE"/>
</dbReference>
<dbReference type="SUPFAM" id="SSF51430">
    <property type="entry name" value="NAD(P)-linked oxidoreductase"/>
    <property type="match status" value="1"/>
</dbReference>
<dbReference type="PROSITE" id="PS00798">
    <property type="entry name" value="ALDOKETO_REDUCTASE_1"/>
    <property type="match status" value="1"/>
</dbReference>
<dbReference type="PROSITE" id="PS00062">
    <property type="entry name" value="ALDOKETO_REDUCTASE_2"/>
    <property type="match status" value="1"/>
</dbReference>
<dbReference type="PROSITE" id="PS00063">
    <property type="entry name" value="ALDOKETO_REDUCTASE_3"/>
    <property type="match status" value="1"/>
</dbReference>
<proteinExistence type="evidence at protein level"/>